<reference key="1">
    <citation type="submission" date="2008-05" db="EMBL/GenBank/DDBJ databases">
        <title>Genome sequence of Helicobacter pylori from the remote Amazon: traces of Asian ancestry of the first Americans.</title>
        <authorList>
            <person name="Kersulyte D."/>
            <person name="Kalia A."/>
            <person name="Gilman R.H."/>
            <person name="Berg D.E."/>
        </authorList>
    </citation>
    <scope>NUCLEOTIDE SEQUENCE [LARGE SCALE GENOMIC DNA]</scope>
    <source>
        <strain>Shi470</strain>
    </source>
</reference>
<name>BIOB_HELPS</name>
<feature type="chain" id="PRO_0000381428" description="Biotin synthase">
    <location>
        <begin position="1"/>
        <end position="282"/>
    </location>
</feature>
<feature type="domain" description="Radical SAM core" evidence="2">
    <location>
        <begin position="1"/>
        <end position="228"/>
    </location>
</feature>
<feature type="binding site" evidence="1">
    <location>
        <position position="17"/>
    </location>
    <ligand>
        <name>[4Fe-4S] cluster</name>
        <dbReference type="ChEBI" id="CHEBI:49883"/>
        <note>4Fe-4S-S-AdoMet</note>
    </ligand>
</feature>
<feature type="binding site" evidence="1">
    <location>
        <position position="21"/>
    </location>
    <ligand>
        <name>[4Fe-4S] cluster</name>
        <dbReference type="ChEBI" id="CHEBI:49883"/>
        <note>4Fe-4S-S-AdoMet</note>
    </ligand>
</feature>
<feature type="binding site" evidence="1">
    <location>
        <position position="24"/>
    </location>
    <ligand>
        <name>[4Fe-4S] cluster</name>
        <dbReference type="ChEBI" id="CHEBI:49883"/>
        <note>4Fe-4S-S-AdoMet</note>
    </ligand>
</feature>
<feature type="binding site" evidence="1">
    <location>
        <position position="61"/>
    </location>
    <ligand>
        <name>[2Fe-2S] cluster</name>
        <dbReference type="ChEBI" id="CHEBI:190135"/>
    </ligand>
</feature>
<feature type="binding site" evidence="1">
    <location>
        <position position="96"/>
    </location>
    <ligand>
        <name>[2Fe-2S] cluster</name>
        <dbReference type="ChEBI" id="CHEBI:190135"/>
    </ligand>
</feature>
<feature type="binding site" evidence="1">
    <location>
        <position position="154"/>
    </location>
    <ligand>
        <name>[2Fe-2S] cluster</name>
        <dbReference type="ChEBI" id="CHEBI:190135"/>
    </ligand>
</feature>
<feature type="binding site" evidence="1">
    <location>
        <position position="221"/>
    </location>
    <ligand>
        <name>[2Fe-2S] cluster</name>
        <dbReference type="ChEBI" id="CHEBI:190135"/>
    </ligand>
</feature>
<accession>B2UVE8</accession>
<sequence length="282" mass="31506">MQEIFLCSISNVRSGDCKEDCAYCTQSSHHQGAIKRYKFKDEKVVLQEARALRELGALGFCLVTSGRELDDEKCEYIAKLAKAINQEELGLHLIACCGRADLEQLEFLRDAGIHSYNHNLETSQNFFPKICSTHTWEERFITCENALRAGLGLCSGGIFGLNESWEDRIEMLRALASLSPHTTPINFFIKNPVLPIDTETLSADEALECVLLAKEFLPNARLMVAGGREVVFKDNDKKEAKLFEYGINAVVLGDYLTTKGKAPKKDIEKLLSYGLTMATSCH</sequence>
<organism>
    <name type="scientific">Helicobacter pylori (strain Shi470)</name>
    <dbReference type="NCBI Taxonomy" id="512562"/>
    <lineage>
        <taxon>Bacteria</taxon>
        <taxon>Pseudomonadati</taxon>
        <taxon>Campylobacterota</taxon>
        <taxon>Epsilonproteobacteria</taxon>
        <taxon>Campylobacterales</taxon>
        <taxon>Helicobacteraceae</taxon>
        <taxon>Helicobacter</taxon>
    </lineage>
</organism>
<protein>
    <recommendedName>
        <fullName evidence="1">Biotin synthase</fullName>
        <ecNumber evidence="1">2.8.1.6</ecNumber>
    </recommendedName>
</protein>
<comment type="function">
    <text evidence="1">Catalyzes the conversion of dethiobiotin (DTB) to biotin by the insertion of a sulfur atom into dethiobiotin via a radical-based mechanism.</text>
</comment>
<comment type="catalytic activity">
    <reaction evidence="1">
        <text>(4R,5S)-dethiobiotin + (sulfur carrier)-SH + 2 reduced [2Fe-2S]-[ferredoxin] + 2 S-adenosyl-L-methionine = (sulfur carrier)-H + biotin + 2 5'-deoxyadenosine + 2 L-methionine + 2 oxidized [2Fe-2S]-[ferredoxin]</text>
        <dbReference type="Rhea" id="RHEA:22060"/>
        <dbReference type="Rhea" id="RHEA-COMP:10000"/>
        <dbReference type="Rhea" id="RHEA-COMP:10001"/>
        <dbReference type="Rhea" id="RHEA-COMP:14737"/>
        <dbReference type="Rhea" id="RHEA-COMP:14739"/>
        <dbReference type="ChEBI" id="CHEBI:17319"/>
        <dbReference type="ChEBI" id="CHEBI:29917"/>
        <dbReference type="ChEBI" id="CHEBI:33737"/>
        <dbReference type="ChEBI" id="CHEBI:33738"/>
        <dbReference type="ChEBI" id="CHEBI:57586"/>
        <dbReference type="ChEBI" id="CHEBI:57844"/>
        <dbReference type="ChEBI" id="CHEBI:59789"/>
        <dbReference type="ChEBI" id="CHEBI:64428"/>
        <dbReference type="ChEBI" id="CHEBI:149473"/>
        <dbReference type="EC" id="2.8.1.6"/>
    </reaction>
</comment>
<comment type="cofactor">
    <cofactor evidence="1">
        <name>[4Fe-4S] cluster</name>
        <dbReference type="ChEBI" id="CHEBI:49883"/>
    </cofactor>
    <text evidence="1">Binds 1 [4Fe-4S] cluster. The cluster is coordinated with 3 cysteines and an exchangeable S-adenosyl-L-methionine.</text>
</comment>
<comment type="cofactor">
    <cofactor evidence="1">
        <name>[2Fe-2S] cluster</name>
        <dbReference type="ChEBI" id="CHEBI:190135"/>
    </cofactor>
    <text evidence="1">Binds 1 [2Fe-2S] cluster. The cluster is coordinated with 3 cysteines and 1 arginine.</text>
</comment>
<comment type="pathway">
    <text evidence="1">Cofactor biosynthesis; biotin biosynthesis; biotin from 7,8-diaminononanoate: step 2/2.</text>
</comment>
<comment type="subunit">
    <text evidence="1">Homodimer.</text>
</comment>
<comment type="similarity">
    <text evidence="1">Belongs to the radical SAM superfamily. Biotin synthase family.</text>
</comment>
<evidence type="ECO:0000255" key="1">
    <source>
        <dbReference type="HAMAP-Rule" id="MF_01694"/>
    </source>
</evidence>
<evidence type="ECO:0000255" key="2">
    <source>
        <dbReference type="PROSITE-ProRule" id="PRU01266"/>
    </source>
</evidence>
<keyword id="KW-0001">2Fe-2S</keyword>
<keyword id="KW-0004">4Fe-4S</keyword>
<keyword id="KW-0093">Biotin biosynthesis</keyword>
<keyword id="KW-0408">Iron</keyword>
<keyword id="KW-0411">Iron-sulfur</keyword>
<keyword id="KW-0479">Metal-binding</keyword>
<keyword id="KW-0949">S-adenosyl-L-methionine</keyword>
<keyword id="KW-0808">Transferase</keyword>
<dbReference type="EC" id="2.8.1.6" evidence="1"/>
<dbReference type="EMBL" id="CP001072">
    <property type="protein sequence ID" value="ACD48830.1"/>
    <property type="molecule type" value="Genomic_DNA"/>
</dbReference>
<dbReference type="RefSeq" id="WP_001155624.1">
    <property type="nucleotide sequence ID" value="NC_010698.2"/>
</dbReference>
<dbReference type="SMR" id="B2UVE8"/>
<dbReference type="KEGG" id="hps:HPSH_07170"/>
<dbReference type="HOGENOM" id="CLU_033172_2_1_7"/>
<dbReference type="UniPathway" id="UPA00078">
    <property type="reaction ID" value="UER00162"/>
</dbReference>
<dbReference type="GO" id="GO:0051537">
    <property type="term" value="F:2 iron, 2 sulfur cluster binding"/>
    <property type="evidence" value="ECO:0007669"/>
    <property type="project" value="UniProtKB-KW"/>
</dbReference>
<dbReference type="GO" id="GO:0051539">
    <property type="term" value="F:4 iron, 4 sulfur cluster binding"/>
    <property type="evidence" value="ECO:0007669"/>
    <property type="project" value="UniProtKB-KW"/>
</dbReference>
<dbReference type="GO" id="GO:0004076">
    <property type="term" value="F:biotin synthase activity"/>
    <property type="evidence" value="ECO:0007669"/>
    <property type="project" value="UniProtKB-UniRule"/>
</dbReference>
<dbReference type="GO" id="GO:0005506">
    <property type="term" value="F:iron ion binding"/>
    <property type="evidence" value="ECO:0007669"/>
    <property type="project" value="UniProtKB-UniRule"/>
</dbReference>
<dbReference type="GO" id="GO:0009102">
    <property type="term" value="P:biotin biosynthetic process"/>
    <property type="evidence" value="ECO:0007669"/>
    <property type="project" value="UniProtKB-UniRule"/>
</dbReference>
<dbReference type="CDD" id="cd01335">
    <property type="entry name" value="Radical_SAM"/>
    <property type="match status" value="1"/>
</dbReference>
<dbReference type="FunFam" id="3.20.20.70:FF:000158">
    <property type="entry name" value="Biotin synthase"/>
    <property type="match status" value="1"/>
</dbReference>
<dbReference type="Gene3D" id="3.20.20.70">
    <property type="entry name" value="Aldolase class I"/>
    <property type="match status" value="1"/>
</dbReference>
<dbReference type="HAMAP" id="MF_01694">
    <property type="entry name" value="BioB"/>
    <property type="match status" value="1"/>
</dbReference>
<dbReference type="InterPro" id="IPR013785">
    <property type="entry name" value="Aldolase_TIM"/>
</dbReference>
<dbReference type="InterPro" id="IPR010722">
    <property type="entry name" value="BATS_dom"/>
</dbReference>
<dbReference type="InterPro" id="IPR002684">
    <property type="entry name" value="Biotin_synth/BioAB"/>
</dbReference>
<dbReference type="InterPro" id="IPR024177">
    <property type="entry name" value="Biotin_synthase"/>
</dbReference>
<dbReference type="InterPro" id="IPR006638">
    <property type="entry name" value="Elp3/MiaA/NifB-like_rSAM"/>
</dbReference>
<dbReference type="InterPro" id="IPR007197">
    <property type="entry name" value="rSAM"/>
</dbReference>
<dbReference type="NCBIfam" id="TIGR00433">
    <property type="entry name" value="bioB"/>
    <property type="match status" value="1"/>
</dbReference>
<dbReference type="NCBIfam" id="NF006308">
    <property type="entry name" value="PRK08508.1"/>
    <property type="match status" value="1"/>
</dbReference>
<dbReference type="PANTHER" id="PTHR22976">
    <property type="entry name" value="BIOTIN SYNTHASE"/>
    <property type="match status" value="1"/>
</dbReference>
<dbReference type="PANTHER" id="PTHR22976:SF2">
    <property type="entry name" value="BIOTIN SYNTHASE, MITOCHONDRIAL"/>
    <property type="match status" value="1"/>
</dbReference>
<dbReference type="Pfam" id="PF06968">
    <property type="entry name" value="BATS"/>
    <property type="match status" value="1"/>
</dbReference>
<dbReference type="Pfam" id="PF04055">
    <property type="entry name" value="Radical_SAM"/>
    <property type="match status" value="1"/>
</dbReference>
<dbReference type="PIRSF" id="PIRSF001619">
    <property type="entry name" value="Biotin_synth"/>
    <property type="match status" value="1"/>
</dbReference>
<dbReference type="SFLD" id="SFLDG01278">
    <property type="entry name" value="biotin_synthase_like"/>
    <property type="match status" value="1"/>
</dbReference>
<dbReference type="SFLD" id="SFLDS00029">
    <property type="entry name" value="Radical_SAM"/>
    <property type="match status" value="1"/>
</dbReference>
<dbReference type="SMART" id="SM00876">
    <property type="entry name" value="BATS"/>
    <property type="match status" value="1"/>
</dbReference>
<dbReference type="SMART" id="SM00729">
    <property type="entry name" value="Elp3"/>
    <property type="match status" value="1"/>
</dbReference>
<dbReference type="SUPFAM" id="SSF102114">
    <property type="entry name" value="Radical SAM enzymes"/>
    <property type="match status" value="1"/>
</dbReference>
<dbReference type="PROSITE" id="PS51918">
    <property type="entry name" value="RADICAL_SAM"/>
    <property type="match status" value="1"/>
</dbReference>
<gene>
    <name evidence="1" type="primary">bioB</name>
    <name type="ordered locus">HPSH_07170</name>
</gene>
<proteinExistence type="inferred from homology"/>